<accession>Q72ZC1</accession>
<sequence length="227" mass="24903">MKVSYHGHSVVKIETNGKVILIDPFLTGNPKTDLKAEDVKVDAILLSHGHGDHVGDTVELAKKNNAVVVAPFELATFLSWQGVKTHPMHIGGSHEFDFGKVKFTQAFHGSSYIDEENKTITYTGMPAGILFTAEEKTLYHAGDTALFSDMKLIGELNNIDVAFLPIGDNFTMGPEDAVLAAKWVQAKTVVPMHYNTFPVIEQDPYQFVEKLQNCTGKVLEAGESITL</sequence>
<gene>
    <name type="ordered locus">BCE_4747</name>
</gene>
<name>Y4747_BACC1</name>
<organism>
    <name type="scientific">Bacillus cereus (strain ATCC 10987 / NRS 248)</name>
    <dbReference type="NCBI Taxonomy" id="222523"/>
    <lineage>
        <taxon>Bacteria</taxon>
        <taxon>Bacillati</taxon>
        <taxon>Bacillota</taxon>
        <taxon>Bacilli</taxon>
        <taxon>Bacillales</taxon>
        <taxon>Bacillaceae</taxon>
        <taxon>Bacillus</taxon>
        <taxon>Bacillus cereus group</taxon>
    </lineage>
</organism>
<reference key="1">
    <citation type="journal article" date="2004" name="Nucleic Acids Res.">
        <title>The genome sequence of Bacillus cereus ATCC 10987 reveals metabolic adaptations and a large plasmid related to Bacillus anthracis pXO1.</title>
        <authorList>
            <person name="Rasko D.A."/>
            <person name="Ravel J."/>
            <person name="Oekstad O.A."/>
            <person name="Helgason E."/>
            <person name="Cer R.Z."/>
            <person name="Jiang L."/>
            <person name="Shores K.A."/>
            <person name="Fouts D.E."/>
            <person name="Tourasse N.J."/>
            <person name="Angiuoli S.V."/>
            <person name="Kolonay J.F."/>
            <person name="Nelson W.C."/>
            <person name="Kolstoe A.-B."/>
            <person name="Fraser C.M."/>
            <person name="Read T.D."/>
        </authorList>
    </citation>
    <scope>NUCLEOTIDE SEQUENCE [LARGE SCALE GENOMIC DNA]</scope>
    <source>
        <strain>ATCC 10987 / NRS 248</strain>
    </source>
</reference>
<comment type="similarity">
    <text evidence="1">Belongs to the UPF0173 family.</text>
</comment>
<proteinExistence type="inferred from homology"/>
<feature type="chain" id="PRO_0000156367" description="UPF0173 metal-dependent hydrolase BCE_4747">
    <location>
        <begin position="1"/>
        <end position="227"/>
    </location>
</feature>
<protein>
    <recommendedName>
        <fullName evidence="1">UPF0173 metal-dependent hydrolase BCE_4747</fullName>
    </recommendedName>
</protein>
<evidence type="ECO:0000255" key="1">
    <source>
        <dbReference type="HAMAP-Rule" id="MF_00457"/>
    </source>
</evidence>
<keyword id="KW-0378">Hydrolase</keyword>
<dbReference type="EMBL" id="AE017194">
    <property type="protein sequence ID" value="AAS43648.1"/>
    <property type="molecule type" value="Genomic_DNA"/>
</dbReference>
<dbReference type="SMR" id="Q72ZC1"/>
<dbReference type="KEGG" id="bca:BCE_4747"/>
<dbReference type="HOGENOM" id="CLU_070010_4_1_9"/>
<dbReference type="Proteomes" id="UP000002527">
    <property type="component" value="Chromosome"/>
</dbReference>
<dbReference type="GO" id="GO:0016787">
    <property type="term" value="F:hydrolase activity"/>
    <property type="evidence" value="ECO:0007669"/>
    <property type="project" value="UniProtKB-UniRule"/>
</dbReference>
<dbReference type="Gene3D" id="3.60.15.10">
    <property type="entry name" value="Ribonuclease Z/Hydroxyacylglutathione hydrolase-like"/>
    <property type="match status" value="1"/>
</dbReference>
<dbReference type="HAMAP" id="MF_00457">
    <property type="entry name" value="UPF0173"/>
    <property type="match status" value="1"/>
</dbReference>
<dbReference type="InterPro" id="IPR001279">
    <property type="entry name" value="Metallo-B-lactamas"/>
</dbReference>
<dbReference type="InterPro" id="IPR036866">
    <property type="entry name" value="RibonucZ/Hydroxyglut_hydro"/>
</dbReference>
<dbReference type="InterPro" id="IPR022877">
    <property type="entry name" value="UPF0173"/>
</dbReference>
<dbReference type="InterPro" id="IPR050114">
    <property type="entry name" value="UPF0173_UPF0282_UlaG_hydrolase"/>
</dbReference>
<dbReference type="NCBIfam" id="NF001911">
    <property type="entry name" value="PRK00685.1"/>
    <property type="match status" value="1"/>
</dbReference>
<dbReference type="PANTHER" id="PTHR43546:SF3">
    <property type="entry name" value="UPF0173 METAL-DEPENDENT HYDROLASE MJ1163"/>
    <property type="match status" value="1"/>
</dbReference>
<dbReference type="PANTHER" id="PTHR43546">
    <property type="entry name" value="UPF0173 METAL-DEPENDENT HYDROLASE MJ1163-RELATED"/>
    <property type="match status" value="1"/>
</dbReference>
<dbReference type="Pfam" id="PF12706">
    <property type="entry name" value="Lactamase_B_2"/>
    <property type="match status" value="1"/>
</dbReference>
<dbReference type="SMART" id="SM00849">
    <property type="entry name" value="Lactamase_B"/>
    <property type="match status" value="1"/>
</dbReference>
<dbReference type="SUPFAM" id="SSF56281">
    <property type="entry name" value="Metallo-hydrolase/oxidoreductase"/>
    <property type="match status" value="1"/>
</dbReference>